<keyword id="KW-0472">Membrane</keyword>
<keyword id="KW-0346">Stress response</keyword>
<keyword id="KW-0812">Transmembrane</keyword>
<keyword id="KW-1133">Transmembrane helix</keyword>
<sequence>MASATFIEVILAIILPPVGVFLRYGLAVEFWICLLLTLLGYIPGIIYAVYVLVA</sequence>
<reference key="1">
    <citation type="journal article" date="2001" name="Planta">
        <title>Identification of a novel low-temperature-response element in the promoter of the barley (Hordeum vulgare L) gene blt101.1.</title>
        <authorList>
            <person name="Brown A.P.C."/>
            <person name="Dunn M.A."/>
            <person name="Goddard N.J."/>
            <person name="Hughes M.A."/>
        </authorList>
    </citation>
    <scope>NUCLEOTIDE SEQUENCE [GENOMIC DNA]</scope>
    <source>
        <strain>cv. Igri</strain>
    </source>
</reference>
<feature type="chain" id="PRO_0000193979" description="Low temperature-induced protein lt101.2">
    <location>
        <begin position="1"/>
        <end position="54"/>
    </location>
</feature>
<feature type="transmembrane region" description="Helical" evidence="1">
    <location>
        <begin position="2"/>
        <end position="22"/>
    </location>
</feature>
<feature type="transmembrane region" description="Helical" evidence="1">
    <location>
        <begin position="34"/>
        <end position="54"/>
    </location>
</feature>
<accession>Q9ARD5</accession>
<evidence type="ECO:0000255" key="1"/>
<evidence type="ECO:0000305" key="2"/>
<protein>
    <recommendedName>
        <fullName>Low temperature-induced protein lt101.2</fullName>
    </recommendedName>
</protein>
<name>LT02_HORVU</name>
<comment type="subcellular location">
    <subcellularLocation>
        <location evidence="2">Membrane</location>
        <topology evidence="2">Multi-pass membrane protein</topology>
    </subcellularLocation>
</comment>
<comment type="induction">
    <text>By cold shock and salt stress.</text>
</comment>
<comment type="similarity">
    <text evidence="2">Belongs to the UPF0057 (PMP3) family.</text>
</comment>
<dbReference type="EMBL" id="AJ310995">
    <property type="protein sequence ID" value="CAC37082.1"/>
    <property type="molecule type" value="Genomic_DNA"/>
</dbReference>
<dbReference type="SMR" id="Q9ARD5"/>
<dbReference type="OMA" id="STATFCE"/>
<dbReference type="ExpressionAtlas" id="Q9ARD5">
    <property type="expression patterns" value="baseline and differential"/>
</dbReference>
<dbReference type="GO" id="GO:0016020">
    <property type="term" value="C:membrane"/>
    <property type="evidence" value="ECO:0007669"/>
    <property type="project" value="UniProtKB-SubCell"/>
</dbReference>
<dbReference type="InterPro" id="IPR000612">
    <property type="entry name" value="PMP3"/>
</dbReference>
<dbReference type="PANTHER" id="PTHR21659">
    <property type="entry name" value="HYDROPHOBIC PROTEIN RCI2 LOW TEMPERATURE AND SALT RESPONSIVE PROTEIN LTI6 -RELATED"/>
    <property type="match status" value="1"/>
</dbReference>
<dbReference type="PANTHER" id="PTHR21659:SF117">
    <property type="entry name" value="OS03G0286900 PROTEIN"/>
    <property type="match status" value="1"/>
</dbReference>
<dbReference type="Pfam" id="PF01679">
    <property type="entry name" value="Pmp3"/>
    <property type="match status" value="1"/>
</dbReference>
<dbReference type="PROSITE" id="PS01309">
    <property type="entry name" value="UPF0057"/>
    <property type="match status" value="1"/>
</dbReference>
<organism>
    <name type="scientific">Hordeum vulgare</name>
    <name type="common">Barley</name>
    <dbReference type="NCBI Taxonomy" id="4513"/>
    <lineage>
        <taxon>Eukaryota</taxon>
        <taxon>Viridiplantae</taxon>
        <taxon>Streptophyta</taxon>
        <taxon>Embryophyta</taxon>
        <taxon>Tracheophyta</taxon>
        <taxon>Spermatophyta</taxon>
        <taxon>Magnoliopsida</taxon>
        <taxon>Liliopsida</taxon>
        <taxon>Poales</taxon>
        <taxon>Poaceae</taxon>
        <taxon>BOP clade</taxon>
        <taxon>Pooideae</taxon>
        <taxon>Triticodae</taxon>
        <taxon>Triticeae</taxon>
        <taxon>Hordeinae</taxon>
        <taxon>Hordeum</taxon>
    </lineage>
</organism>
<gene>
    <name type="primary">LT101.2</name>
</gene>
<proteinExistence type="evidence at transcript level"/>